<feature type="chain" id="PRO_0000202385" description="UPF0162 protein PM0557">
    <location>
        <begin position="1"/>
        <end position="264"/>
    </location>
</feature>
<name>Y557_PASMU</name>
<reference key="1">
    <citation type="journal article" date="2001" name="Proc. Natl. Acad. Sci. U.S.A.">
        <title>Complete genomic sequence of Pasteurella multocida Pm70.</title>
        <authorList>
            <person name="May B.J."/>
            <person name="Zhang Q."/>
            <person name="Li L.L."/>
            <person name="Paustian M.L."/>
            <person name="Whittam T.S."/>
            <person name="Kapur V."/>
        </authorList>
    </citation>
    <scope>NUCLEOTIDE SEQUENCE [LARGE SCALE GENOMIC DNA]</scope>
    <source>
        <strain>Pm70</strain>
    </source>
</reference>
<sequence length="264" mass="30576">MNYVKKALYDEMLSFYHTTLGMEHEDRLRLRGQIGHLVRVARKEIPDTLETKAKIHLLLQLFYGEWGFHCDPESYFLSSNLYLNDVLETRRGMPVSLGAILLYIADKLNLPLYPVNFPTQLVIRAEVEGEVAFINPWDGQYISQALLHKWYEGAMGFGMTLTPTELAIANVGDLLGRFRQLAKNALIREEKNDEAFCYIARLIHYNPEDPYEIRDRGLVLAQMGCYHVATEDFQYFIDQCPQDPTALLLKNQLEELKQDTYPIH</sequence>
<protein>
    <recommendedName>
        <fullName>UPF0162 protein PM0557</fullName>
    </recommendedName>
</protein>
<comment type="similarity">
    <text evidence="1">Belongs to the UPF0162 family.</text>
</comment>
<gene>
    <name type="ordered locus">PM0557</name>
</gene>
<proteinExistence type="inferred from homology"/>
<evidence type="ECO:0000305" key="1"/>
<keyword id="KW-1185">Reference proteome</keyword>
<organism>
    <name type="scientific">Pasteurella multocida (strain Pm70)</name>
    <dbReference type="NCBI Taxonomy" id="272843"/>
    <lineage>
        <taxon>Bacteria</taxon>
        <taxon>Pseudomonadati</taxon>
        <taxon>Pseudomonadota</taxon>
        <taxon>Gammaproteobacteria</taxon>
        <taxon>Pasteurellales</taxon>
        <taxon>Pasteurellaceae</taxon>
        <taxon>Pasteurella</taxon>
    </lineage>
</organism>
<accession>Q9CN81</accession>
<dbReference type="EMBL" id="AE004439">
    <property type="protein sequence ID" value="AAK02641.1"/>
    <property type="molecule type" value="Genomic_DNA"/>
</dbReference>
<dbReference type="RefSeq" id="WP_010906723.1">
    <property type="nucleotide sequence ID" value="NC_002663.1"/>
</dbReference>
<dbReference type="SMR" id="Q9CN81"/>
<dbReference type="STRING" id="272843.PM0557"/>
<dbReference type="EnsemblBacteria" id="AAK02641">
    <property type="protein sequence ID" value="AAK02641"/>
    <property type="gene ID" value="PM0557"/>
</dbReference>
<dbReference type="KEGG" id="pmu:PM0557"/>
<dbReference type="PATRIC" id="fig|272843.6.peg.564"/>
<dbReference type="HOGENOM" id="CLU_063810_0_1_6"/>
<dbReference type="OrthoDB" id="232498at2"/>
<dbReference type="Proteomes" id="UP000000809">
    <property type="component" value="Chromosome"/>
</dbReference>
<dbReference type="Gene3D" id="1.25.40.10">
    <property type="entry name" value="Tetratricopeptide repeat domain"/>
    <property type="match status" value="1"/>
</dbReference>
<dbReference type="InterPro" id="IPR032698">
    <property type="entry name" value="SirB1_N"/>
</dbReference>
<dbReference type="InterPro" id="IPR011990">
    <property type="entry name" value="TPR-like_helical_dom_sf"/>
</dbReference>
<dbReference type="PANTHER" id="PTHR31350:SF21">
    <property type="entry name" value="F-BOX ONLY PROTEIN 21"/>
    <property type="match status" value="1"/>
</dbReference>
<dbReference type="PANTHER" id="PTHR31350">
    <property type="entry name" value="SI:DKEY-261L7.2"/>
    <property type="match status" value="1"/>
</dbReference>
<dbReference type="Pfam" id="PF13371">
    <property type="entry name" value="TPR_9"/>
    <property type="match status" value="1"/>
</dbReference>
<dbReference type="Pfam" id="PF13369">
    <property type="entry name" value="Transglut_core2"/>
    <property type="match status" value="1"/>
</dbReference>
<dbReference type="SUPFAM" id="SSF48452">
    <property type="entry name" value="TPR-like"/>
    <property type="match status" value="1"/>
</dbReference>